<feature type="initiator methionine" description="Removed" evidence="14">
    <location>
        <position position="1"/>
    </location>
</feature>
<feature type="chain" id="PRO_0000349219" description="E3 ubiquitin-protein ligase KCMF1">
    <location>
        <begin position="2"/>
        <end position="381"/>
    </location>
</feature>
<feature type="zinc finger region" description="ZZ-type" evidence="3">
    <location>
        <begin position="4"/>
        <end position="60"/>
    </location>
</feature>
<feature type="zinc finger region" description="C2H2-type" evidence="2">
    <location>
        <begin position="78"/>
        <end position="101"/>
    </location>
</feature>
<feature type="region of interest" description="Disordered" evidence="4">
    <location>
        <begin position="154"/>
        <end position="193"/>
    </location>
</feature>
<feature type="region of interest" description="Disordered" evidence="4">
    <location>
        <begin position="294"/>
        <end position="314"/>
    </location>
</feature>
<feature type="coiled-coil region" evidence="1">
    <location>
        <begin position="225"/>
        <end position="257"/>
    </location>
</feature>
<feature type="compositionally biased region" description="Low complexity" evidence="4">
    <location>
        <begin position="175"/>
        <end position="191"/>
    </location>
</feature>
<feature type="compositionally biased region" description="Basic and acidic residues" evidence="4">
    <location>
        <begin position="297"/>
        <end position="314"/>
    </location>
</feature>
<feature type="binding site" evidence="3">
    <location>
        <position position="9"/>
    </location>
    <ligand>
        <name>Zn(2+)</name>
        <dbReference type="ChEBI" id="CHEBI:29105"/>
        <label>1</label>
    </ligand>
</feature>
<feature type="binding site" evidence="3">
    <location>
        <position position="12"/>
    </location>
    <ligand>
        <name>Zn(2+)</name>
        <dbReference type="ChEBI" id="CHEBI:29105"/>
        <label>1</label>
    </ligand>
</feature>
<feature type="binding site" evidence="3">
    <location>
        <position position="24"/>
    </location>
    <ligand>
        <name>Zn(2+)</name>
        <dbReference type="ChEBI" id="CHEBI:29105"/>
        <label>2</label>
    </ligand>
</feature>
<feature type="binding site" evidence="3">
    <location>
        <position position="27"/>
    </location>
    <ligand>
        <name>Zn(2+)</name>
        <dbReference type="ChEBI" id="CHEBI:29105"/>
        <label>2</label>
    </ligand>
</feature>
<feature type="binding site" evidence="3">
    <location>
        <position position="33"/>
    </location>
    <ligand>
        <name>Zn(2+)</name>
        <dbReference type="ChEBI" id="CHEBI:29105"/>
        <label>1</label>
    </ligand>
</feature>
<feature type="binding site" evidence="3">
    <location>
        <position position="36"/>
    </location>
    <ligand>
        <name>Zn(2+)</name>
        <dbReference type="ChEBI" id="CHEBI:29105"/>
        <label>1</label>
    </ligand>
</feature>
<feature type="binding site" evidence="3">
    <location>
        <position position="46"/>
    </location>
    <ligand>
        <name>Zn(2+)</name>
        <dbReference type="ChEBI" id="CHEBI:29105"/>
        <label>2</label>
    </ligand>
</feature>
<feature type="binding site" evidence="3">
    <location>
        <position position="50"/>
    </location>
    <ligand>
        <name>Zn(2+)</name>
        <dbReference type="ChEBI" id="CHEBI:29105"/>
        <label>2</label>
    </ligand>
</feature>
<feature type="modified residue" description="N-acetylserine" evidence="14">
    <location>
        <position position="2"/>
    </location>
</feature>
<feature type="modified residue" description="Phosphoserine" evidence="15">
    <location>
        <position position="2"/>
    </location>
</feature>
<feature type="modified residue" description="Phosphoserine" evidence="15">
    <location>
        <position position="169"/>
    </location>
</feature>
<feature type="modified residue" description="Phosphoserine" evidence="15">
    <location>
        <position position="189"/>
    </location>
</feature>
<feature type="modified residue" description="Phosphoserine" evidence="14">
    <location>
        <position position="212"/>
    </location>
</feature>
<feature type="modified residue" description="Phosphoserine" evidence="16">
    <location>
        <position position="335"/>
    </location>
</feature>
<feature type="modified residue" description="Phosphoserine" evidence="16">
    <location>
        <position position="336"/>
    </location>
</feature>
<feature type="sequence conflict" description="In Ref. 3; BAB14563." evidence="12" ref="3">
    <original>E</original>
    <variation>G</variation>
    <location>
        <position position="95"/>
    </location>
</feature>
<feature type="sequence conflict" description="In Ref. 1; BAC43745 and 2; AAF67009." evidence="12" ref="1 2">
    <original>Q</original>
    <variation>R</variation>
    <location>
        <position position="242"/>
    </location>
</feature>
<organism>
    <name type="scientific">Homo sapiens</name>
    <name type="common">Human</name>
    <dbReference type="NCBI Taxonomy" id="9606"/>
    <lineage>
        <taxon>Eukaryota</taxon>
        <taxon>Metazoa</taxon>
        <taxon>Chordata</taxon>
        <taxon>Craniata</taxon>
        <taxon>Vertebrata</taxon>
        <taxon>Euteleostomi</taxon>
        <taxon>Mammalia</taxon>
        <taxon>Eutheria</taxon>
        <taxon>Euarchontoglires</taxon>
        <taxon>Primates</taxon>
        <taxon>Haplorrhini</taxon>
        <taxon>Catarrhini</taxon>
        <taxon>Hominidae</taxon>
        <taxon>Homo</taxon>
    </lineage>
</organism>
<keyword id="KW-0007">Acetylation</keyword>
<keyword id="KW-0175">Coiled coil</keyword>
<keyword id="KW-0963">Cytoplasm</keyword>
<keyword id="KW-0967">Endosome</keyword>
<keyword id="KW-0458">Lysosome</keyword>
<keyword id="KW-0479">Metal-binding</keyword>
<keyword id="KW-0597">Phosphoprotein</keyword>
<keyword id="KW-1267">Proteomics identification</keyword>
<keyword id="KW-1185">Reference proteome</keyword>
<keyword id="KW-0808">Transferase</keyword>
<keyword id="KW-0833">Ubl conjugation pathway</keyword>
<keyword id="KW-0862">Zinc</keyword>
<keyword id="KW-0863">Zinc-finger</keyword>
<sequence length="381" mass="41945">MSRHEGVSCDACLKGNFRGRRYKCLICYDYDLCASCYESGATTTRHTTDHPMQCILTRVDFDLYYGGEAFSVEQPQSFTCPYCGKMGYTETSLQEHVTSEHAETSTEVICPICAALPGGDPNHVTDDFAAHLTLEHRAPRDLDESSGVRHVRRMFHPGRGLGGPRARRSNMHFTSSSTGGLSSSQSSYSPSNREAMDPIAELLSQLSGVRRSAGGQLNSSGPSASQLQQLQMQLQLERQHAQAARQQLETARNATRRTNTSSVTTTITQSTATTNIANTESSQQTLQNSQFLLTRLNDPKMSETERQSMESERADRSLFVQELLLSTLVREESSSSDEDDRGEMADFGAMGCVDIMPLDVALENLNLKESNKGNEPPPPPL</sequence>
<reference key="1">
    <citation type="journal article" date="2004" name="FEBS Lett.">
        <title>FIGC, a novel FGF-induced ubiquitin-protein ligase in gastric cancers.</title>
        <authorList>
            <person name="Jang J.-H."/>
        </authorList>
    </citation>
    <scope>NUCLEOTIDE SEQUENCE [MRNA]</scope>
    <scope>FUNCTION</scope>
    <scope>INDUCTION</scope>
    <scope>TISSUE SPECIFICITY</scope>
    <source>
        <tissue>Stomach</tissue>
    </source>
</reference>
<reference key="2">
    <citation type="submission" date="2000-05" db="EMBL/GenBank/DDBJ databases">
        <title>A novel gene expressed in the human adrenal gland.</title>
        <authorList>
            <person name="Ren S."/>
            <person name="Li Y."/>
            <person name="Huang C."/>
            <person name="Jiang C."/>
            <person name="Gu W."/>
            <person name="Zhou J."/>
            <person name="Yu Y."/>
            <person name="Xu S."/>
            <person name="Wang Y."/>
            <person name="Fu G."/>
            <person name="Chen Z."/>
            <person name="Han Z."/>
        </authorList>
    </citation>
    <scope>NUCLEOTIDE SEQUENCE [LARGE SCALE MRNA]</scope>
    <source>
        <tissue>Adrenal gland</tissue>
    </source>
</reference>
<reference key="3">
    <citation type="journal article" date="2004" name="Nat. Genet.">
        <title>Complete sequencing and characterization of 21,243 full-length human cDNAs.</title>
        <authorList>
            <person name="Ota T."/>
            <person name="Suzuki Y."/>
            <person name="Nishikawa T."/>
            <person name="Otsuki T."/>
            <person name="Sugiyama T."/>
            <person name="Irie R."/>
            <person name="Wakamatsu A."/>
            <person name="Hayashi K."/>
            <person name="Sato H."/>
            <person name="Nagai K."/>
            <person name="Kimura K."/>
            <person name="Makita H."/>
            <person name="Sekine M."/>
            <person name="Obayashi M."/>
            <person name="Nishi T."/>
            <person name="Shibahara T."/>
            <person name="Tanaka T."/>
            <person name="Ishii S."/>
            <person name="Yamamoto J."/>
            <person name="Saito K."/>
            <person name="Kawai Y."/>
            <person name="Isono Y."/>
            <person name="Nakamura Y."/>
            <person name="Nagahari K."/>
            <person name="Murakami K."/>
            <person name="Yasuda T."/>
            <person name="Iwayanagi T."/>
            <person name="Wagatsuma M."/>
            <person name="Shiratori A."/>
            <person name="Sudo H."/>
            <person name="Hosoiri T."/>
            <person name="Kaku Y."/>
            <person name="Kodaira H."/>
            <person name="Kondo H."/>
            <person name="Sugawara M."/>
            <person name="Takahashi M."/>
            <person name="Kanda K."/>
            <person name="Yokoi T."/>
            <person name="Furuya T."/>
            <person name="Kikkawa E."/>
            <person name="Omura Y."/>
            <person name="Abe K."/>
            <person name="Kamihara K."/>
            <person name="Katsuta N."/>
            <person name="Sato K."/>
            <person name="Tanikawa M."/>
            <person name="Yamazaki M."/>
            <person name="Ninomiya K."/>
            <person name="Ishibashi T."/>
            <person name="Yamashita H."/>
            <person name="Murakawa K."/>
            <person name="Fujimori K."/>
            <person name="Tanai H."/>
            <person name="Kimata M."/>
            <person name="Watanabe M."/>
            <person name="Hiraoka S."/>
            <person name="Chiba Y."/>
            <person name="Ishida S."/>
            <person name="Ono Y."/>
            <person name="Takiguchi S."/>
            <person name="Watanabe S."/>
            <person name="Yosida M."/>
            <person name="Hotuta T."/>
            <person name="Kusano J."/>
            <person name="Kanehori K."/>
            <person name="Takahashi-Fujii A."/>
            <person name="Hara H."/>
            <person name="Tanase T.-O."/>
            <person name="Nomura Y."/>
            <person name="Togiya S."/>
            <person name="Komai F."/>
            <person name="Hara R."/>
            <person name="Takeuchi K."/>
            <person name="Arita M."/>
            <person name="Imose N."/>
            <person name="Musashino K."/>
            <person name="Yuuki H."/>
            <person name="Oshima A."/>
            <person name="Sasaki N."/>
            <person name="Aotsuka S."/>
            <person name="Yoshikawa Y."/>
            <person name="Matsunawa H."/>
            <person name="Ichihara T."/>
            <person name="Shiohata N."/>
            <person name="Sano S."/>
            <person name="Moriya S."/>
            <person name="Momiyama H."/>
            <person name="Satoh N."/>
            <person name="Takami S."/>
            <person name="Terashima Y."/>
            <person name="Suzuki O."/>
            <person name="Nakagawa S."/>
            <person name="Senoh A."/>
            <person name="Mizoguchi H."/>
            <person name="Goto Y."/>
            <person name="Shimizu F."/>
            <person name="Wakebe H."/>
            <person name="Hishigaki H."/>
            <person name="Watanabe T."/>
            <person name="Sugiyama A."/>
            <person name="Takemoto M."/>
            <person name="Kawakami B."/>
            <person name="Yamazaki M."/>
            <person name="Watanabe K."/>
            <person name="Kumagai A."/>
            <person name="Itakura S."/>
            <person name="Fukuzumi Y."/>
            <person name="Fujimori Y."/>
            <person name="Komiyama M."/>
            <person name="Tashiro H."/>
            <person name="Tanigami A."/>
            <person name="Fujiwara T."/>
            <person name="Ono T."/>
            <person name="Yamada K."/>
            <person name="Fujii Y."/>
            <person name="Ozaki K."/>
            <person name="Hirao M."/>
            <person name="Ohmori Y."/>
            <person name="Kawabata A."/>
            <person name="Hikiji T."/>
            <person name="Kobatake N."/>
            <person name="Inagaki H."/>
            <person name="Ikema Y."/>
            <person name="Okamoto S."/>
            <person name="Okitani R."/>
            <person name="Kawakami T."/>
            <person name="Noguchi S."/>
            <person name="Itoh T."/>
            <person name="Shigeta K."/>
            <person name="Senba T."/>
            <person name="Matsumura K."/>
            <person name="Nakajima Y."/>
            <person name="Mizuno T."/>
            <person name="Morinaga M."/>
            <person name="Sasaki M."/>
            <person name="Togashi T."/>
            <person name="Oyama M."/>
            <person name="Hata H."/>
            <person name="Watanabe M."/>
            <person name="Komatsu T."/>
            <person name="Mizushima-Sugano J."/>
            <person name="Satoh T."/>
            <person name="Shirai Y."/>
            <person name="Takahashi Y."/>
            <person name="Nakagawa K."/>
            <person name="Okumura K."/>
            <person name="Nagase T."/>
            <person name="Nomura N."/>
            <person name="Kikuchi H."/>
            <person name="Masuho Y."/>
            <person name="Yamashita R."/>
            <person name="Nakai K."/>
            <person name="Yada T."/>
            <person name="Nakamura Y."/>
            <person name="Ohara O."/>
            <person name="Isogai T."/>
            <person name="Sugano S."/>
        </authorList>
    </citation>
    <scope>NUCLEOTIDE SEQUENCE [LARGE SCALE MRNA]</scope>
    <source>
        <tissue>Ovary</tissue>
        <tissue>Testis</tissue>
    </source>
</reference>
<reference key="4">
    <citation type="journal article" date="2004" name="Genome Res.">
        <title>The status, quality, and expansion of the NIH full-length cDNA project: the Mammalian Gene Collection (MGC).</title>
        <authorList>
            <consortium name="The MGC Project Team"/>
        </authorList>
    </citation>
    <scope>NUCLEOTIDE SEQUENCE [LARGE SCALE MRNA]</scope>
    <source>
        <tissue>Cervix</tissue>
    </source>
</reference>
<reference key="5">
    <citation type="journal article" date="2007" name="BMC Genomics">
        <title>The full-ORF clone resource of the German cDNA consortium.</title>
        <authorList>
            <person name="Bechtel S."/>
            <person name="Rosenfelder H."/>
            <person name="Duda A."/>
            <person name="Schmidt C.P."/>
            <person name="Ernst U."/>
            <person name="Wellenreuther R."/>
            <person name="Mehrle A."/>
            <person name="Schuster C."/>
            <person name="Bahr A."/>
            <person name="Bloecker H."/>
            <person name="Heubner D."/>
            <person name="Hoerlein A."/>
            <person name="Michel G."/>
            <person name="Wedler H."/>
            <person name="Koehrer K."/>
            <person name="Ottenwaelder B."/>
            <person name="Poustka A."/>
            <person name="Wiemann S."/>
            <person name="Schupp I."/>
        </authorList>
    </citation>
    <scope>NUCLEOTIDE SEQUENCE [LARGE SCALE MRNA] OF 102-381</scope>
    <source>
        <tissue>Testis</tissue>
    </source>
</reference>
<reference key="6">
    <citation type="journal article" date="2008" name="Mol. Cell">
        <title>Kinase-selective enrichment enables quantitative phosphoproteomics of the kinome across the cell cycle.</title>
        <authorList>
            <person name="Daub H."/>
            <person name="Olsen J.V."/>
            <person name="Bairlein M."/>
            <person name="Gnad F."/>
            <person name="Oppermann F.S."/>
            <person name="Korner R."/>
            <person name="Greff Z."/>
            <person name="Keri G."/>
            <person name="Stemmann O."/>
            <person name="Mann M."/>
        </authorList>
    </citation>
    <scope>IDENTIFICATION BY MASS SPECTROMETRY [LARGE SCALE ANALYSIS]</scope>
    <source>
        <tissue>Cervix carcinoma</tissue>
    </source>
</reference>
<reference key="7">
    <citation type="journal article" date="2008" name="Proc. Natl. Acad. Sci. U.S.A.">
        <title>A quantitative atlas of mitotic phosphorylation.</title>
        <authorList>
            <person name="Dephoure N."/>
            <person name="Zhou C."/>
            <person name="Villen J."/>
            <person name="Beausoleil S.A."/>
            <person name="Bakalarski C.E."/>
            <person name="Elledge S.J."/>
            <person name="Gygi S.P."/>
        </authorList>
    </citation>
    <scope>IDENTIFICATION BY MASS SPECTROMETRY [LARGE SCALE ANALYSIS]</scope>
    <source>
        <tissue>Cervix carcinoma</tissue>
    </source>
</reference>
<reference key="8">
    <citation type="journal article" date="2010" name="Sci. Signal.">
        <title>Quantitative phosphoproteomics reveals widespread full phosphorylation site occupancy during mitosis.</title>
        <authorList>
            <person name="Olsen J.V."/>
            <person name="Vermeulen M."/>
            <person name="Santamaria A."/>
            <person name="Kumar C."/>
            <person name="Miller M.L."/>
            <person name="Jensen L.J."/>
            <person name="Gnad F."/>
            <person name="Cox J."/>
            <person name="Jensen T.S."/>
            <person name="Nigg E.A."/>
            <person name="Brunak S."/>
            <person name="Mann M."/>
        </authorList>
    </citation>
    <scope>ACETYLATION [LARGE SCALE ANALYSIS] AT SER-2</scope>
    <scope>PHOSPHORYLATION [LARGE SCALE ANALYSIS] AT SER-212</scope>
    <scope>CLEAVAGE OF INITIATOR METHIONINE [LARGE SCALE ANALYSIS]</scope>
    <scope>IDENTIFICATION BY MASS SPECTROMETRY [LARGE SCALE ANALYSIS]</scope>
    <source>
        <tissue>Cervix carcinoma</tissue>
    </source>
</reference>
<reference key="9">
    <citation type="journal article" date="2011" name="BMC Syst. Biol.">
        <title>Initial characterization of the human central proteome.</title>
        <authorList>
            <person name="Burkard T.R."/>
            <person name="Planyavsky M."/>
            <person name="Kaupe I."/>
            <person name="Breitwieser F.P."/>
            <person name="Buerckstuemmer T."/>
            <person name="Bennett K.L."/>
            <person name="Superti-Furga G."/>
            <person name="Colinge J."/>
        </authorList>
    </citation>
    <scope>IDENTIFICATION BY MASS SPECTROMETRY [LARGE SCALE ANALYSIS]</scope>
</reference>
<reference key="10">
    <citation type="journal article" date="2013" name="J. Proteome Res.">
        <title>Toward a comprehensive characterization of a human cancer cell phosphoproteome.</title>
        <authorList>
            <person name="Zhou H."/>
            <person name="Di Palma S."/>
            <person name="Preisinger C."/>
            <person name="Peng M."/>
            <person name="Polat A.N."/>
            <person name="Heck A.J."/>
            <person name="Mohammed S."/>
        </authorList>
    </citation>
    <scope>PHOSPHORYLATION [LARGE SCALE ANALYSIS] AT SER-2; SER-169 AND SER-189</scope>
    <scope>IDENTIFICATION BY MASS SPECTROMETRY [LARGE SCALE ANALYSIS]</scope>
    <source>
        <tissue>Cervix carcinoma</tissue>
        <tissue>Erythroleukemia</tissue>
    </source>
</reference>
<reference key="11">
    <citation type="journal article" date="2014" name="J. Proteomics">
        <title>An enzyme assisted RP-RPLC approach for in-depth analysis of human liver phosphoproteome.</title>
        <authorList>
            <person name="Bian Y."/>
            <person name="Song C."/>
            <person name="Cheng K."/>
            <person name="Dong M."/>
            <person name="Wang F."/>
            <person name="Huang J."/>
            <person name="Sun D."/>
            <person name="Wang L."/>
            <person name="Ye M."/>
            <person name="Zou H."/>
        </authorList>
    </citation>
    <scope>PHOSPHORYLATION [LARGE SCALE ANALYSIS] AT SER-335 AND SER-336</scope>
    <scope>IDENTIFICATION BY MASS SPECTROMETRY [LARGE SCALE ANALYSIS]</scope>
    <source>
        <tissue>Liver</tissue>
    </source>
</reference>
<reference key="12">
    <citation type="journal article" date="2015" name="Mol. Cell. Proteomics">
        <title>KCMF1 (potassium channel modulatory factor 1) Links RAD6 to UBR4 (ubiquitin N-recognin domain-containing E3 ligase 4) and lysosome-mediated degradation.</title>
        <authorList>
            <person name="Hong J.H."/>
            <person name="Kaustov L."/>
            <person name="Coyaud E."/>
            <person name="Srikumar T."/>
            <person name="Wan J."/>
            <person name="Arrowsmith C."/>
            <person name="Raught B."/>
        </authorList>
    </citation>
    <scope>FUNCTION</scope>
    <scope>PATHWAY</scope>
    <scope>IDENTIFICATION IN THE SIFI COMPLEX</scope>
    <scope>INTERACTION WITH UBE2A</scope>
    <scope>SUBCELLULAR LOCATION</scope>
</reference>
<reference key="13">
    <citation type="journal article" date="2021" name="Proc. Natl. Acad. Sci. U.S.A.">
        <title>The N-terminal cysteine is a dual sensor of oxygen and oxidative stress.</title>
        <authorList>
            <person name="Heo A.J."/>
            <person name="Kim S.B."/>
            <person name="Ji C.H."/>
            <person name="Han D."/>
            <person name="Lee S.J."/>
            <person name="Lee S.H."/>
            <person name="Lee M.J."/>
            <person name="Lee J.S."/>
            <person name="Ciechanover A."/>
            <person name="Kim B.Y."/>
            <person name="Kwon Y.T."/>
        </authorList>
    </citation>
    <scope>FUNCTION</scope>
    <scope>CATALYTIC ACTIVITY</scope>
    <scope>PATHWAY</scope>
</reference>
<reference key="14">
    <citation type="journal article" date="2023" name="Nat. Commun.">
        <title>N-terminal acetylation shields proteins from degradation and promotes age-dependent motility and longevity.</title>
        <authorList>
            <person name="Varland S."/>
            <person name="Silva R.D."/>
            <person name="Kjosaas I."/>
            <person name="Faustino A."/>
            <person name="Bogaert A."/>
            <person name="Billmann M."/>
            <person name="Boukhatmi H."/>
            <person name="Kellen B."/>
            <person name="Costanzo M."/>
            <person name="Drazic A."/>
            <person name="Osberg C."/>
            <person name="Chan K."/>
            <person name="Zhang X."/>
            <person name="Tong A.H.Y."/>
            <person name="Andreazza S."/>
            <person name="Lee J.J."/>
            <person name="Nedyalkova L."/>
            <person name="Usaj M."/>
            <person name="Whitworth A.J."/>
            <person name="Andrews B.J."/>
            <person name="Moffat J."/>
            <person name="Myers C.L."/>
            <person name="Gevaert K."/>
            <person name="Boone C."/>
            <person name="Martinho R.G."/>
            <person name="Arnesen T."/>
        </authorList>
    </citation>
    <scope>FUNCTION</scope>
    <scope>PATHWAY</scope>
</reference>
<reference key="15">
    <citation type="journal article" date="2024" name="Nature">
        <title>Stress response silencing by an E3 ligase mutated in neurodegeneration.</title>
        <authorList>
            <person name="Haakonsen D.L."/>
            <person name="Heider M."/>
            <person name="Ingersoll A.J."/>
            <person name="Vodehnal K."/>
            <person name="Witus S.R."/>
            <person name="Uenaka T."/>
            <person name="Wernig M."/>
            <person name="Rape M."/>
        </authorList>
    </citation>
    <scope>FUNCTION</scope>
    <scope>CATALYTIC ACTIVITY</scope>
    <scope>IDENTIFICATION IN THE SIFI COMPLEX</scope>
    <scope>SUBCELLULAR LOCATION</scope>
    <scope>PATHWAY</scope>
</reference>
<dbReference type="EC" id="2.3.2.27" evidence="7 9"/>
<dbReference type="EMBL" id="AB083199">
    <property type="protein sequence ID" value="BAC43745.1"/>
    <property type="molecule type" value="mRNA"/>
</dbReference>
<dbReference type="EMBL" id="AF155652">
    <property type="protein sequence ID" value="AAF67009.1"/>
    <property type="molecule type" value="mRNA"/>
</dbReference>
<dbReference type="EMBL" id="AK023403">
    <property type="protein sequence ID" value="BAB14563.1"/>
    <property type="molecule type" value="mRNA"/>
</dbReference>
<dbReference type="EMBL" id="AK314761">
    <property type="protein sequence ID" value="BAG37299.1"/>
    <property type="molecule type" value="mRNA"/>
</dbReference>
<dbReference type="EMBL" id="AC022210">
    <property type="protein sequence ID" value="AAY24192.1"/>
    <property type="molecule type" value="Genomic_DNA"/>
</dbReference>
<dbReference type="EMBL" id="AC078974">
    <property type="protein sequence ID" value="AAX88897.1"/>
    <property type="status" value="ALT_INIT"/>
    <property type="molecule type" value="Genomic_DNA"/>
</dbReference>
<dbReference type="EMBL" id="BC000178">
    <property type="protein sequence ID" value="AAH00178.1"/>
    <property type="molecule type" value="mRNA"/>
</dbReference>
<dbReference type="EMBL" id="AL122115">
    <property type="protein sequence ID" value="CAB59274.1"/>
    <property type="molecule type" value="mRNA"/>
</dbReference>
<dbReference type="CCDS" id="CCDS46350.1"/>
<dbReference type="PIR" id="T34540">
    <property type="entry name" value="T34540"/>
</dbReference>
<dbReference type="RefSeq" id="NP_064507.3">
    <property type="nucleotide sequence ID" value="NM_020122.4"/>
</dbReference>
<dbReference type="SMR" id="Q9P0J7"/>
<dbReference type="BioGRID" id="121218">
    <property type="interactions" value="203"/>
</dbReference>
<dbReference type="ComplexPortal" id="CPX-9141">
    <property type="entry name" value="Silencing factor of the integrated stress response complex"/>
</dbReference>
<dbReference type="CORUM" id="Q9P0J7"/>
<dbReference type="DIP" id="DIP-47300N"/>
<dbReference type="FunCoup" id="Q9P0J7">
    <property type="interactions" value="1312"/>
</dbReference>
<dbReference type="IntAct" id="Q9P0J7">
    <property type="interactions" value="77"/>
</dbReference>
<dbReference type="MINT" id="Q9P0J7"/>
<dbReference type="STRING" id="9606.ENSP00000386738"/>
<dbReference type="GlyCosmos" id="Q9P0J7">
    <property type="glycosylation" value="1 site, 1 glycan"/>
</dbReference>
<dbReference type="GlyGen" id="Q9P0J7">
    <property type="glycosylation" value="2 sites, 1 N-linked glycan (1 site), 1 O-linked glycan (1 site)"/>
</dbReference>
<dbReference type="iPTMnet" id="Q9P0J7"/>
<dbReference type="MetOSite" id="Q9P0J7"/>
<dbReference type="PhosphoSitePlus" id="Q9P0J7"/>
<dbReference type="SwissPalm" id="Q9P0J7"/>
<dbReference type="BioMuta" id="KCMF1"/>
<dbReference type="jPOST" id="Q9P0J7"/>
<dbReference type="MassIVE" id="Q9P0J7"/>
<dbReference type="PaxDb" id="9606-ENSP00000386738"/>
<dbReference type="PeptideAtlas" id="Q9P0J7"/>
<dbReference type="ProteomicsDB" id="83555"/>
<dbReference type="Pumba" id="Q9P0J7"/>
<dbReference type="Antibodypedia" id="31781">
    <property type="antibodies" value="141 antibodies from 18 providers"/>
</dbReference>
<dbReference type="DNASU" id="56888"/>
<dbReference type="Ensembl" id="ENST00000409785.9">
    <property type="protein sequence ID" value="ENSP00000386738.3"/>
    <property type="gene ID" value="ENSG00000176407.18"/>
</dbReference>
<dbReference type="GeneID" id="56888"/>
<dbReference type="KEGG" id="hsa:56888"/>
<dbReference type="MANE-Select" id="ENST00000409785.9">
    <property type="protein sequence ID" value="ENSP00000386738.3"/>
    <property type="RefSeq nucleotide sequence ID" value="NM_020122.5"/>
    <property type="RefSeq protein sequence ID" value="NP_064507.3"/>
</dbReference>
<dbReference type="UCSC" id="uc002sox.5">
    <property type="organism name" value="human"/>
</dbReference>
<dbReference type="AGR" id="HGNC:20589"/>
<dbReference type="CTD" id="56888"/>
<dbReference type="DisGeNET" id="56888"/>
<dbReference type="GeneCards" id="KCMF1"/>
<dbReference type="HGNC" id="HGNC:20589">
    <property type="gene designation" value="KCMF1"/>
</dbReference>
<dbReference type="HPA" id="ENSG00000176407">
    <property type="expression patterns" value="Low tissue specificity"/>
</dbReference>
<dbReference type="MIM" id="614719">
    <property type="type" value="gene"/>
</dbReference>
<dbReference type="neXtProt" id="NX_Q9P0J7"/>
<dbReference type="OpenTargets" id="ENSG00000176407"/>
<dbReference type="PharmGKB" id="PA134967694"/>
<dbReference type="VEuPathDB" id="HostDB:ENSG00000176407"/>
<dbReference type="eggNOG" id="KOG1280">
    <property type="taxonomic scope" value="Eukaryota"/>
</dbReference>
<dbReference type="GeneTree" id="ENSGT00510000047171"/>
<dbReference type="HOGENOM" id="CLU_032080_1_1_1"/>
<dbReference type="InParanoid" id="Q9P0J7"/>
<dbReference type="OMA" id="GRNQSTE"/>
<dbReference type="OrthoDB" id="7873042at2759"/>
<dbReference type="PAN-GO" id="Q9P0J7">
    <property type="GO annotations" value="2 GO annotations based on evolutionary models"/>
</dbReference>
<dbReference type="PhylomeDB" id="Q9P0J7"/>
<dbReference type="TreeFam" id="TF318128"/>
<dbReference type="PathwayCommons" id="Q9P0J7"/>
<dbReference type="Reactome" id="R-HSA-6798695">
    <property type="pathway name" value="Neutrophil degranulation"/>
</dbReference>
<dbReference type="SignaLink" id="Q9P0J7"/>
<dbReference type="SIGNOR" id="Q9P0J7"/>
<dbReference type="UniPathway" id="UPA00143"/>
<dbReference type="BioGRID-ORCS" id="56888">
    <property type="hits" value="701 hits in 1176 CRISPR screens"/>
</dbReference>
<dbReference type="ChiTaRS" id="KCMF1">
    <property type="organism name" value="human"/>
</dbReference>
<dbReference type="GenomeRNAi" id="56888"/>
<dbReference type="Pharos" id="Q9P0J7">
    <property type="development level" value="Tbio"/>
</dbReference>
<dbReference type="PRO" id="PR:Q9P0J7"/>
<dbReference type="Proteomes" id="UP000005640">
    <property type="component" value="Chromosome 2"/>
</dbReference>
<dbReference type="RNAct" id="Q9P0J7">
    <property type="molecule type" value="protein"/>
</dbReference>
<dbReference type="Bgee" id="ENSG00000176407">
    <property type="expression patterns" value="Expressed in sperm and 209 other cell types or tissues"/>
</dbReference>
<dbReference type="ExpressionAtlas" id="Q9P0J7">
    <property type="expression patterns" value="baseline and differential"/>
</dbReference>
<dbReference type="GO" id="GO:0005737">
    <property type="term" value="C:cytoplasm"/>
    <property type="evidence" value="ECO:0000314"/>
    <property type="project" value="UniProtKB"/>
</dbReference>
<dbReference type="GO" id="GO:0005829">
    <property type="term" value="C:cytosol"/>
    <property type="evidence" value="ECO:0000314"/>
    <property type="project" value="HPA"/>
</dbReference>
<dbReference type="GO" id="GO:0005576">
    <property type="term" value="C:extracellular region"/>
    <property type="evidence" value="ECO:0000304"/>
    <property type="project" value="Reactome"/>
</dbReference>
<dbReference type="GO" id="GO:1904813">
    <property type="term" value="C:ficolin-1-rich granule lumen"/>
    <property type="evidence" value="ECO:0000304"/>
    <property type="project" value="Reactome"/>
</dbReference>
<dbReference type="GO" id="GO:0005770">
    <property type="term" value="C:late endosome"/>
    <property type="evidence" value="ECO:0007669"/>
    <property type="project" value="UniProtKB-SubCell"/>
</dbReference>
<dbReference type="GO" id="GO:0005764">
    <property type="term" value="C:lysosome"/>
    <property type="evidence" value="ECO:0007669"/>
    <property type="project" value="UniProtKB-SubCell"/>
</dbReference>
<dbReference type="GO" id="GO:0005886">
    <property type="term" value="C:plasma membrane"/>
    <property type="evidence" value="ECO:0000318"/>
    <property type="project" value="GO_Central"/>
</dbReference>
<dbReference type="GO" id="GO:0045202">
    <property type="term" value="C:synapse"/>
    <property type="evidence" value="ECO:0007669"/>
    <property type="project" value="GOC"/>
</dbReference>
<dbReference type="GO" id="GO:0061630">
    <property type="term" value="F:ubiquitin protein ligase activity"/>
    <property type="evidence" value="ECO:0000314"/>
    <property type="project" value="UniProtKB"/>
</dbReference>
<dbReference type="GO" id="GO:0008270">
    <property type="term" value="F:zinc ion binding"/>
    <property type="evidence" value="ECO:0007669"/>
    <property type="project" value="UniProtKB-KW"/>
</dbReference>
<dbReference type="GO" id="GO:0141191">
    <property type="term" value="P:negative regulation of HRI-mediated signaling"/>
    <property type="evidence" value="ECO:0000314"/>
    <property type="project" value="UniProtKB"/>
</dbReference>
<dbReference type="GO" id="GO:0043161">
    <property type="term" value="P:proteasome-mediated ubiquitin-dependent protein catabolic process"/>
    <property type="evidence" value="ECO:0000314"/>
    <property type="project" value="UniProtKB"/>
</dbReference>
<dbReference type="GO" id="GO:0070936">
    <property type="term" value="P:protein K48-linked ubiquitination"/>
    <property type="evidence" value="ECO:0000314"/>
    <property type="project" value="UniProtKB"/>
</dbReference>
<dbReference type="GO" id="GO:0070534">
    <property type="term" value="P:protein K63-linked ubiquitination"/>
    <property type="evidence" value="ECO:0000314"/>
    <property type="project" value="UniProtKB"/>
</dbReference>
<dbReference type="GO" id="GO:0006979">
    <property type="term" value="P:response to oxidative stress"/>
    <property type="evidence" value="ECO:0000314"/>
    <property type="project" value="UniProt"/>
</dbReference>
<dbReference type="GO" id="GO:0099536">
    <property type="term" value="P:synaptic signaling"/>
    <property type="evidence" value="ECO:0000318"/>
    <property type="project" value="GO_Central"/>
</dbReference>
<dbReference type="GO" id="GO:0006511">
    <property type="term" value="P:ubiquitin-dependent protein catabolic process"/>
    <property type="evidence" value="ECO:0000314"/>
    <property type="project" value="UniProt"/>
</dbReference>
<dbReference type="CDD" id="cd02338">
    <property type="entry name" value="ZZ_PCMF_like"/>
    <property type="match status" value="1"/>
</dbReference>
<dbReference type="FunFam" id="3.30.60.90:FF:000017">
    <property type="entry name" value="E3 ubiquitin-protein ligase KCMF1"/>
    <property type="match status" value="1"/>
</dbReference>
<dbReference type="Gene3D" id="3.30.60.90">
    <property type="match status" value="1"/>
</dbReference>
<dbReference type="InterPro" id="IPR008598">
    <property type="entry name" value="Di19_Zn-bd"/>
</dbReference>
<dbReference type="InterPro" id="IPR050774">
    <property type="entry name" value="KCMF1/Dystrophin"/>
</dbReference>
<dbReference type="InterPro" id="IPR013087">
    <property type="entry name" value="Znf_C2H2_type"/>
</dbReference>
<dbReference type="InterPro" id="IPR000433">
    <property type="entry name" value="Znf_ZZ"/>
</dbReference>
<dbReference type="InterPro" id="IPR043145">
    <property type="entry name" value="Znf_ZZ_sf"/>
</dbReference>
<dbReference type="PANTHER" id="PTHR12268">
    <property type="entry name" value="E3 UBIQUITIN-PROTEIN LIGASE KCMF1"/>
    <property type="match status" value="1"/>
</dbReference>
<dbReference type="PANTHER" id="PTHR12268:SF13">
    <property type="entry name" value="E3 UBIQUITIN-PROTEIN LIGASE KCMF1"/>
    <property type="match status" value="1"/>
</dbReference>
<dbReference type="Pfam" id="PF05605">
    <property type="entry name" value="zf-Di19"/>
    <property type="match status" value="1"/>
</dbReference>
<dbReference type="Pfam" id="PF00569">
    <property type="entry name" value="ZZ"/>
    <property type="match status" value="1"/>
</dbReference>
<dbReference type="SMART" id="SM00355">
    <property type="entry name" value="ZnF_C2H2"/>
    <property type="match status" value="1"/>
</dbReference>
<dbReference type="SMART" id="SM00291">
    <property type="entry name" value="ZnF_ZZ"/>
    <property type="match status" value="1"/>
</dbReference>
<dbReference type="SUPFAM" id="SSF57850">
    <property type="entry name" value="RING/U-box"/>
    <property type="match status" value="1"/>
</dbReference>
<dbReference type="PROSITE" id="PS01357">
    <property type="entry name" value="ZF_ZZ_1"/>
    <property type="match status" value="1"/>
</dbReference>
<dbReference type="PROSITE" id="PS50135">
    <property type="entry name" value="ZF_ZZ_2"/>
    <property type="match status" value="1"/>
</dbReference>
<dbReference type="PROSITE" id="PS50157">
    <property type="entry name" value="ZINC_FINGER_C2H2_2"/>
    <property type="match status" value="1"/>
</dbReference>
<proteinExistence type="evidence at protein level"/>
<comment type="function">
    <text evidence="5 6 7 8 9">E3 ubiquitin-protein ligase which accepts ubiquitin from an E2 ubiquitin-conjugating enzyme and then transfers it to targeted substrates, promoting their degradation by the proteasome (PubMed:15581609, PubMed:25582440, PubMed:34893540, PubMed:37891180, PubMed:38297121). Together with UBR4, component of the N-end rule pathway: ubiquitinates proteins bearing specific N-terminal residues that are destabilizing according to the N-end rule, leading to their degradation (PubMed:34893540, PubMed:37891180). Does not ubiquitinate proteins that are acetylated at the N-terminus (PubMed:37891180). Together with UBR4, part of a protein quality control pathway that catalyzes ubiquitination and degradation of proteins that have been oxidized in response to reactive oxygen species (ROS): recognizes proteins with an Arg-CysO3(H) degron at the N-terminus, and mediates assembly of heterotypic 'Lys-63'-/'Lys-27'-linked branched ubiquitin chains on oxidized proteins, leading to their degradation by autophagy (PubMed:34893540). Catalytic component of the SIFI complex, a multiprotein complex required to inhibit the mitochondrial stress response after a specific stress event has been resolved: ubiquitinates and degrades (1) components of the HRI-mediated signaling of the integrated stress response, such as DELE1 and EIF2AK1/HRI, as well as (2) unimported mitochondrial precursors (PubMed:38297121). Within the SIFI complex, UBR4 initiates ubiquitin chain that are further elongated or branched by KCMF1 (PubMed:38297121).</text>
</comment>
<comment type="catalytic activity">
    <reaction evidence="7 9">
        <text>S-ubiquitinyl-[E2 ubiquitin-conjugating enzyme]-L-cysteine + [acceptor protein]-L-lysine = [E2 ubiquitin-conjugating enzyme]-L-cysteine + N(6)-ubiquitinyl-[acceptor protein]-L-lysine.</text>
        <dbReference type="EC" id="2.3.2.27"/>
    </reaction>
</comment>
<comment type="pathway">
    <text evidence="6 7 8 9">Protein modification; protein ubiquitination.</text>
</comment>
<comment type="subunit">
    <text evidence="6 9">Component of the SIFI complex, composed of KCMF1, UBR4 and calmodulin (CALM1, CALM2 or CALM3).</text>
</comment>
<comment type="subcellular location">
    <subcellularLocation>
        <location evidence="9">Cytoplasm</location>
    </subcellularLocation>
    <subcellularLocation>
        <location evidence="6">Late endosome</location>
    </subcellularLocation>
    <subcellularLocation>
        <location evidence="6">Lysosome</location>
    </subcellularLocation>
</comment>
<comment type="tissue specificity">
    <text evidence="5">Spleen, small intestine, ovary, peripheral blood, lung, kidney and pancreas. Expressed at low levels in the thymus, prostate, testis, colon, heart, brain, placenta and liver.</text>
</comment>
<comment type="induction">
    <text evidence="5">Up-regulated by FGF2 in gastric cancer cells.</text>
</comment>
<comment type="similarity">
    <text evidence="12">Belongs to the KCMF1 family.</text>
</comment>
<comment type="sequence caution" evidence="12">
    <conflict type="erroneous initiation">
        <sequence resource="EMBL-CDS" id="AAX88897"/>
    </conflict>
</comment>
<comment type="online information" name="Atlas of Genetics and Cytogenetics in Oncology and Haematology">
    <link uri="https://atlasgeneticsoncology.org/gene/46364/KCMF1"/>
</comment>
<name>KCMF1_HUMAN</name>
<evidence type="ECO:0000255" key="1"/>
<evidence type="ECO:0000255" key="2">
    <source>
        <dbReference type="PROSITE-ProRule" id="PRU00042"/>
    </source>
</evidence>
<evidence type="ECO:0000255" key="3">
    <source>
        <dbReference type="PROSITE-ProRule" id="PRU00228"/>
    </source>
</evidence>
<evidence type="ECO:0000256" key="4">
    <source>
        <dbReference type="SAM" id="MobiDB-lite"/>
    </source>
</evidence>
<evidence type="ECO:0000269" key="5">
    <source>
    </source>
</evidence>
<evidence type="ECO:0000269" key="6">
    <source>
    </source>
</evidence>
<evidence type="ECO:0000269" key="7">
    <source>
    </source>
</evidence>
<evidence type="ECO:0000269" key="8">
    <source>
    </source>
</evidence>
<evidence type="ECO:0000269" key="9">
    <source>
    </source>
</evidence>
<evidence type="ECO:0000303" key="10">
    <source>
    </source>
</evidence>
<evidence type="ECO:0000303" key="11">
    <source>
    </source>
</evidence>
<evidence type="ECO:0000305" key="12"/>
<evidence type="ECO:0000312" key="13">
    <source>
        <dbReference type="HGNC" id="HGNC:20589"/>
    </source>
</evidence>
<evidence type="ECO:0007744" key="14">
    <source>
    </source>
</evidence>
<evidence type="ECO:0007744" key="15">
    <source>
    </source>
</evidence>
<evidence type="ECO:0007744" key="16">
    <source>
    </source>
</evidence>
<gene>
    <name evidence="11 13" type="primary">KCMF1</name>
    <name evidence="10" type="synonym">FIGC</name>
    <name type="synonym">ZZZ1</name>
</gene>
<accession>Q9P0J7</accession>
<accession>Q4ZG04</accession>
<accession>Q53SC7</accession>
<accession>Q9BWK2</accession>
<accession>Q9H8P5</accession>
<accession>Q9UFE8</accession>
<protein>
    <recommendedName>
        <fullName evidence="12">E3 ubiquitin-protein ligase KCMF1</fullName>
        <ecNumber evidence="7 9">2.3.2.27</ecNumber>
    </recommendedName>
    <alternativeName>
        <fullName evidence="10">FGF-induced in gastric cancer</fullName>
    </alternativeName>
    <alternativeName>
        <fullName>Potassium channel modulatory factor</fullName>
        <shortName>PCMF</shortName>
    </alternativeName>
    <alternativeName>
        <fullName>ZZ-type zinc finger-containing protein 1</fullName>
    </alternativeName>
</protein>